<protein>
    <recommendedName>
        <fullName>Caspase-1</fullName>
        <shortName>CASP-1</shortName>
        <ecNumber evidence="2">3.4.22.36</ecNumber>
    </recommendedName>
    <alternativeName>
        <fullName>Interleukin-1 beta convertase</fullName>
        <shortName>IL-1BC</shortName>
    </alternativeName>
    <alternativeName>
        <fullName>Interleukin-1 beta-converting enzyme</fullName>
        <shortName>ICE</shortName>
        <shortName>IL-1 beta-converting enzyme</shortName>
    </alternativeName>
    <alternativeName>
        <fullName>p45</fullName>
    </alternativeName>
    <component>
        <recommendedName>
            <fullName evidence="2">Caspase-1 subunit p20</fullName>
        </recommendedName>
    </component>
    <component>
        <recommendedName>
            <fullName evidence="2">Caspase-1 subunit p10</fullName>
        </recommendedName>
    </component>
</protein>
<keyword id="KW-0053">Apoptosis</keyword>
<keyword id="KW-1003">Cell membrane</keyword>
<keyword id="KW-0963">Cytoplasm</keyword>
<keyword id="KW-0378">Hydrolase</keyword>
<keyword id="KW-0472">Membrane</keyword>
<keyword id="KW-0645">Protease</keyword>
<keyword id="KW-1185">Reference proteome</keyword>
<keyword id="KW-0788">Thiol protease</keyword>
<keyword id="KW-0832">Ubl conjugation</keyword>
<keyword id="KW-0865">Zymogen</keyword>
<evidence type="ECO:0000250" key="1">
    <source>
        <dbReference type="UniProtKB" id="P29452"/>
    </source>
</evidence>
<evidence type="ECO:0000250" key="2">
    <source>
        <dbReference type="UniProtKB" id="P29466"/>
    </source>
</evidence>
<evidence type="ECO:0000255" key="3"/>
<evidence type="ECO:0000255" key="4">
    <source>
        <dbReference type="PROSITE-ProRule" id="PRU00046"/>
    </source>
</evidence>
<evidence type="ECO:0000256" key="5">
    <source>
        <dbReference type="SAM" id="MobiDB-lite"/>
    </source>
</evidence>
<evidence type="ECO:0000305" key="6"/>
<sequence>MADKVLKGKRKQFINSVGMGTVNGLLDELFEKNVLNQEEMERVKCENATVMDKARALIDSVLRKGPRACQIFICHICEEDTHLAETLGLSSSPQSGNSQNTTDSEVAFPPLPASVNNMPGPAEPEESVDALKLCPHENFVKLCKQRAEEIYPIKERKDRTRLALIICNTTFDHLSLRKGADLDVAGMRRLLTDLGYSVHIKEELTAKDMESELRAFAARPEHKSSDSTFLVFMSHGILSGICGTKYSAEGDPDVLAYDTIFQIFNNRNCLSLKDKPKVIIVQACRGENLGELLISDSPAAPMDSTSQMGSSLSQVGDNLEDDAIYKVHVEKDFIAFCSSTPHHVSWRDVNKGSLFITQLITCFQKYSWCFHLEEVFRKVQQSFEKPNVRAQMPTIERLSMTRYFYLFPGH</sequence>
<proteinExistence type="evidence at transcript level"/>
<gene>
    <name type="primary">CASP1</name>
    <name type="synonym">IL1BC</name>
</gene>
<feature type="propeptide" id="PRO_0000004513" evidence="3">
    <location>
        <begin position="1"/>
        <end position="119"/>
    </location>
</feature>
<feature type="chain" id="PRO_0000004514" description="Caspase-1 subunit p20" evidence="2">
    <location>
        <begin position="120"/>
        <end position="296"/>
    </location>
</feature>
<feature type="propeptide" id="PRO_0000004515" evidence="3">
    <location>
        <begin position="297"/>
        <end position="322"/>
    </location>
</feature>
<feature type="chain" id="PRO_0000004516" description="Caspase-1 subunit p10" evidence="2">
    <location>
        <begin position="323"/>
        <end position="410"/>
    </location>
</feature>
<feature type="domain" description="CARD" evidence="4">
    <location>
        <begin position="1"/>
        <end position="91"/>
    </location>
</feature>
<feature type="region of interest" description="Disordered" evidence="5">
    <location>
        <begin position="88"/>
        <end position="125"/>
    </location>
</feature>
<feature type="compositionally biased region" description="Polar residues" evidence="5">
    <location>
        <begin position="88"/>
        <end position="104"/>
    </location>
</feature>
<feature type="active site" evidence="2">
    <location>
        <position position="235"/>
    </location>
</feature>
<feature type="active site" evidence="2">
    <location>
        <position position="284"/>
    </location>
</feature>
<feature type="sequence variant">
    <original>H</original>
    <variation>R</variation>
    <location>
        <position position="136"/>
    </location>
</feature>
<accession>Q9MZV6</accession>
<comment type="function">
    <text evidence="2">Thiol protease involved in a variety of inflammatory processes by proteolytically cleaving other proteins, such as the precursors of the inflammatory cytokines interleukin-1 beta (IL1B) and interleukin 18 (IL18) as well as the pyroptosis inducer Gasdermin-D (GSDMD), into active mature peptides. Plays a key role in cell immunity as an inflammatory response initiator: once activated through formation of an inflammasome complex, it initiates a pro-inflammatory response through the cleavage of the two inflammatory cytokines IL1B and IL18, releasing the mature cytokines which are involved in a variety of inflammatory processes. Cleaves a tetrapeptide after an Asp residue at position P1. Also initiates pyroptosis, a programmed lytic cell death pathway, through cleavage of GSDMD. In contrast to cleavage of interleukin IL1B, recognition and cleavage of GSDMD is not strictly dependent on the consensus cleavage site but depends on an exosite interface on CASP1 that recognizes and binds the Gasdermin-D, C-terminal (GSDMD-CT) part. Cleaves and activates CASP7 in response to bacterial infection, promoting plasma membrane repair. Upon inflammasome activation, during DNA virus infection but not RNA virus challenge, controls antiviral immunity through the cleavage of CGAS, rendering it inactive. In apoptotic cells, cleaves SPHK2 which is released from cells and remains enzymatically active extracellularly.</text>
</comment>
<comment type="catalytic activity">
    <reaction evidence="2">
        <text>Strict requirement for an Asp residue at position P1 and has a preferred cleavage sequence of Tyr-Val-Ala-Asp-|-.</text>
        <dbReference type="EC" id="3.4.22.36"/>
    </reaction>
</comment>
<comment type="subunit">
    <text evidence="1 2">Heterotetramer that consists of two anti-parallel arranged heterodimers, each one formed by a 20 kDa (Caspase-1 subunit p20) and a 10 kDa (Caspase-1 subunit p10) subunit. May be a component of the inflammasome, a protein complex which also includes PYCARD, CARD8 and NLRP2 and whose function would be the activation of pro-inflammatory caspases. Component of the AIM2 PANoptosome complex, a multiprotein complex that drives inflammatory cell death (PANoptosis). Both the p10 and p20 subunits interact with MEFV. Interacts with CARD17P/INCA and CARD18. Interacts with SERPINB1; this interaction regulates CASP1 activity.</text>
</comment>
<comment type="subunit">
    <molecule>Caspase-1 subunit p20</molecule>
    <text evidence="2">Heterotetramer that consists of two anti-parallel arranged heterodimers, each one formed by a 20 kDa (Caspase-1 subunit p20) and a 10 kDa (Caspase-1 subunit p10) subunit.</text>
</comment>
<comment type="subunit">
    <molecule>Caspase-1 subunit p10</molecule>
    <text evidence="2">Heterotetramer that consists of two anti-parallel arranged heterodimers, each one formed by a 20 kDa (Caspase-1 subunit p20) and a 10 kDa (Caspase-1 subunit p10) subunit.</text>
</comment>
<comment type="subcellular location">
    <subcellularLocation>
        <location evidence="2">Cytoplasm</location>
    </subcellularLocation>
    <subcellularLocation>
        <location evidence="2">Cell membrane</location>
    </subcellularLocation>
</comment>
<comment type="PTM">
    <text evidence="2">The two subunits are derived from the precursor sequence by an autocatalytic mechanism.</text>
</comment>
<comment type="PTM">
    <text evidence="2">Ubiquitinated via 'Lys-11'-linked polyubiquitination. Deubiquitinated by USP8.</text>
</comment>
<comment type="similarity">
    <text evidence="6">Belongs to the peptidase C14A family.</text>
</comment>
<reference key="1">
    <citation type="journal article" date="2000" name="DNA Seq.">
        <title>Cloning and sequencing of feline and canine ice-related cDNAs encoding hybrid caspase-1/caspase-13-like propeptides.</title>
        <authorList>
            <person name="Taylor S."/>
            <person name="Hanlon L."/>
            <person name="McGillivray C."/>
            <person name="Gault E.A."/>
            <person name="Argyle D.J."/>
            <person name="Onions D.E."/>
            <person name="Nicolson L."/>
        </authorList>
    </citation>
    <scope>NUCLEOTIDE SEQUENCE [MRNA]</scope>
</reference>
<organism>
    <name type="scientific">Felis catus</name>
    <name type="common">Cat</name>
    <name type="synonym">Felis silvestris catus</name>
    <dbReference type="NCBI Taxonomy" id="9685"/>
    <lineage>
        <taxon>Eukaryota</taxon>
        <taxon>Metazoa</taxon>
        <taxon>Chordata</taxon>
        <taxon>Craniata</taxon>
        <taxon>Vertebrata</taxon>
        <taxon>Euteleostomi</taxon>
        <taxon>Mammalia</taxon>
        <taxon>Eutheria</taxon>
        <taxon>Laurasiatheria</taxon>
        <taxon>Carnivora</taxon>
        <taxon>Feliformia</taxon>
        <taxon>Felidae</taxon>
        <taxon>Felinae</taxon>
        <taxon>Felis</taxon>
    </lineage>
</organism>
<name>CASP1_FELCA</name>
<dbReference type="EC" id="3.4.22.36" evidence="2"/>
<dbReference type="EMBL" id="AF135968">
    <property type="protein sequence ID" value="AAF64389.1"/>
    <property type="molecule type" value="mRNA"/>
</dbReference>
<dbReference type="RefSeq" id="NP_001009365.1">
    <property type="nucleotide sequence ID" value="NM_001009365.1"/>
</dbReference>
<dbReference type="SMR" id="Q9MZV6"/>
<dbReference type="FunCoup" id="Q9MZV6">
    <property type="interactions" value="41"/>
</dbReference>
<dbReference type="STRING" id="9685.ENSFCAP00000005500"/>
<dbReference type="GeneID" id="493961"/>
<dbReference type="KEGG" id="fca:493961"/>
<dbReference type="CTD" id="837"/>
<dbReference type="eggNOG" id="KOG3573">
    <property type="taxonomic scope" value="Eukaryota"/>
</dbReference>
<dbReference type="InParanoid" id="Q9MZV6"/>
<dbReference type="OrthoDB" id="5984008at2759"/>
<dbReference type="BRENDA" id="3.4.22.36">
    <property type="organism ID" value="2235"/>
</dbReference>
<dbReference type="Proteomes" id="UP000011712">
    <property type="component" value="Unplaced"/>
</dbReference>
<dbReference type="GO" id="GO:0097169">
    <property type="term" value="C:AIM2 inflammasome complex"/>
    <property type="evidence" value="ECO:0000250"/>
    <property type="project" value="UniProtKB"/>
</dbReference>
<dbReference type="GO" id="GO:0072557">
    <property type="term" value="C:IPAF inflammasome complex"/>
    <property type="evidence" value="ECO:0000250"/>
    <property type="project" value="UniProtKB"/>
</dbReference>
<dbReference type="GO" id="GO:0072558">
    <property type="term" value="C:NLRP1 inflammasome complex"/>
    <property type="evidence" value="ECO:0000250"/>
    <property type="project" value="UniProtKB"/>
</dbReference>
<dbReference type="GO" id="GO:0072559">
    <property type="term" value="C:NLRP3 inflammasome complex"/>
    <property type="evidence" value="ECO:0000250"/>
    <property type="project" value="UniProtKB"/>
</dbReference>
<dbReference type="GO" id="GO:0005886">
    <property type="term" value="C:plasma membrane"/>
    <property type="evidence" value="ECO:0007669"/>
    <property type="project" value="UniProtKB-SubCell"/>
</dbReference>
<dbReference type="GO" id="GO:0004197">
    <property type="term" value="F:cysteine-type endopeptidase activity"/>
    <property type="evidence" value="ECO:0000250"/>
    <property type="project" value="UniProtKB"/>
</dbReference>
<dbReference type="GO" id="GO:0006915">
    <property type="term" value="P:apoptotic process"/>
    <property type="evidence" value="ECO:0007669"/>
    <property type="project" value="UniProtKB-KW"/>
</dbReference>
<dbReference type="GO" id="GO:0001819">
    <property type="term" value="P:positive regulation of cytokine production"/>
    <property type="evidence" value="ECO:0000250"/>
    <property type="project" value="UniProtKB"/>
</dbReference>
<dbReference type="GO" id="GO:0032731">
    <property type="term" value="P:positive regulation of interleukin-1 beta production"/>
    <property type="evidence" value="ECO:0000250"/>
    <property type="project" value="UniProtKB"/>
</dbReference>
<dbReference type="GO" id="GO:0016540">
    <property type="term" value="P:protein autoprocessing"/>
    <property type="evidence" value="ECO:0000250"/>
    <property type="project" value="UniProtKB"/>
</dbReference>
<dbReference type="GO" id="GO:0070269">
    <property type="term" value="P:pyroptotic inflammatory response"/>
    <property type="evidence" value="ECO:0000250"/>
    <property type="project" value="UniProtKB"/>
</dbReference>
<dbReference type="GO" id="GO:0042981">
    <property type="term" value="P:regulation of apoptotic process"/>
    <property type="evidence" value="ECO:0007669"/>
    <property type="project" value="InterPro"/>
</dbReference>
<dbReference type="GO" id="GO:0050727">
    <property type="term" value="P:regulation of inflammatory response"/>
    <property type="evidence" value="ECO:0000250"/>
    <property type="project" value="UniProtKB"/>
</dbReference>
<dbReference type="CDD" id="cd08325">
    <property type="entry name" value="CARD_CASP1-like"/>
    <property type="match status" value="1"/>
</dbReference>
<dbReference type="CDD" id="cd00032">
    <property type="entry name" value="CASc"/>
    <property type="match status" value="1"/>
</dbReference>
<dbReference type="FunFam" id="1.10.533.10:FF:000031">
    <property type="entry name" value="Caspase 1, isoform CRA_b"/>
    <property type="match status" value="1"/>
</dbReference>
<dbReference type="FunFam" id="3.40.50.1460:FF:000007">
    <property type="entry name" value="Caspase-1"/>
    <property type="match status" value="1"/>
</dbReference>
<dbReference type="Gene3D" id="3.40.50.1460">
    <property type="match status" value="1"/>
</dbReference>
<dbReference type="Gene3D" id="1.10.533.10">
    <property type="entry name" value="Death Domain, Fas"/>
    <property type="match status" value="1"/>
</dbReference>
<dbReference type="InterPro" id="IPR001315">
    <property type="entry name" value="CARD"/>
</dbReference>
<dbReference type="InterPro" id="IPR029030">
    <property type="entry name" value="Caspase-like_dom_sf"/>
</dbReference>
<dbReference type="InterPro" id="IPR033139">
    <property type="entry name" value="Caspase_cys_AS"/>
</dbReference>
<dbReference type="InterPro" id="IPR016129">
    <property type="entry name" value="Caspase_his_AS"/>
</dbReference>
<dbReference type="InterPro" id="IPR011029">
    <property type="entry name" value="DEATH-like_dom_sf"/>
</dbReference>
<dbReference type="InterPro" id="IPR002398">
    <property type="entry name" value="Pept_C14"/>
</dbReference>
<dbReference type="InterPro" id="IPR011600">
    <property type="entry name" value="Pept_C14_caspase"/>
</dbReference>
<dbReference type="InterPro" id="IPR002138">
    <property type="entry name" value="Pept_C14_p10"/>
</dbReference>
<dbReference type="InterPro" id="IPR001309">
    <property type="entry name" value="Pept_C14_p20"/>
</dbReference>
<dbReference type="InterPro" id="IPR015917">
    <property type="entry name" value="Pept_C14A"/>
</dbReference>
<dbReference type="PANTHER" id="PTHR47901">
    <property type="entry name" value="CASPASE RECRUITMENT DOMAIN-CONTAINING PROTEIN 18"/>
    <property type="match status" value="1"/>
</dbReference>
<dbReference type="PANTHER" id="PTHR47901:SF3">
    <property type="entry name" value="CASPASE-1"/>
    <property type="match status" value="1"/>
</dbReference>
<dbReference type="Pfam" id="PF00619">
    <property type="entry name" value="CARD"/>
    <property type="match status" value="1"/>
</dbReference>
<dbReference type="Pfam" id="PF00656">
    <property type="entry name" value="Peptidase_C14"/>
    <property type="match status" value="1"/>
</dbReference>
<dbReference type="PIRSF" id="PIRSF038001">
    <property type="entry name" value="Caspase_ICE"/>
    <property type="match status" value="1"/>
</dbReference>
<dbReference type="PRINTS" id="PR00376">
    <property type="entry name" value="IL1BCENZYME"/>
</dbReference>
<dbReference type="SMART" id="SM00114">
    <property type="entry name" value="CARD"/>
    <property type="match status" value="1"/>
</dbReference>
<dbReference type="SMART" id="SM00115">
    <property type="entry name" value="CASc"/>
    <property type="match status" value="1"/>
</dbReference>
<dbReference type="SUPFAM" id="SSF52129">
    <property type="entry name" value="Caspase-like"/>
    <property type="match status" value="1"/>
</dbReference>
<dbReference type="SUPFAM" id="SSF47986">
    <property type="entry name" value="DEATH domain"/>
    <property type="match status" value="1"/>
</dbReference>
<dbReference type="PROSITE" id="PS50209">
    <property type="entry name" value="CARD"/>
    <property type="match status" value="1"/>
</dbReference>
<dbReference type="PROSITE" id="PS01122">
    <property type="entry name" value="CASPASE_CYS"/>
    <property type="match status" value="1"/>
</dbReference>
<dbReference type="PROSITE" id="PS01121">
    <property type="entry name" value="CASPASE_HIS"/>
    <property type="match status" value="1"/>
</dbReference>
<dbReference type="PROSITE" id="PS50207">
    <property type="entry name" value="CASPASE_P10"/>
    <property type="match status" value="1"/>
</dbReference>
<dbReference type="PROSITE" id="PS50208">
    <property type="entry name" value="CASPASE_P20"/>
    <property type="match status" value="1"/>
</dbReference>